<name>LIGB_ECODH</name>
<proteinExistence type="inferred from homology"/>
<protein>
    <recommendedName>
        <fullName evidence="1">DNA ligase B</fullName>
        <ecNumber evidence="1">6.5.1.2</ecNumber>
    </recommendedName>
    <alternativeName>
        <fullName evidence="1">Polydeoxyribonucleotide synthase [NAD(+)] B</fullName>
    </alternativeName>
</protein>
<feature type="chain" id="PRO_1000147723" description="DNA ligase B">
    <location>
        <begin position="1"/>
        <end position="560"/>
    </location>
</feature>
<feature type="active site" description="N6-AMP-lysine intermediate" evidence="1">
    <location>
        <position position="124"/>
    </location>
</feature>
<organism>
    <name type="scientific">Escherichia coli (strain K12 / DH10B)</name>
    <dbReference type="NCBI Taxonomy" id="316385"/>
    <lineage>
        <taxon>Bacteria</taxon>
        <taxon>Pseudomonadati</taxon>
        <taxon>Pseudomonadota</taxon>
        <taxon>Gammaproteobacteria</taxon>
        <taxon>Enterobacterales</taxon>
        <taxon>Enterobacteriaceae</taxon>
        <taxon>Escherichia</taxon>
    </lineage>
</organism>
<reference key="1">
    <citation type="journal article" date="2008" name="J. Bacteriol.">
        <title>The complete genome sequence of Escherichia coli DH10B: insights into the biology of a laboratory workhorse.</title>
        <authorList>
            <person name="Durfee T."/>
            <person name="Nelson R."/>
            <person name="Baldwin S."/>
            <person name="Plunkett G. III"/>
            <person name="Burland V."/>
            <person name="Mau B."/>
            <person name="Petrosino J.F."/>
            <person name="Qin X."/>
            <person name="Muzny D.M."/>
            <person name="Ayele M."/>
            <person name="Gibbs R.A."/>
            <person name="Csorgo B."/>
            <person name="Posfai G."/>
            <person name="Weinstock G.M."/>
            <person name="Blattner F.R."/>
        </authorList>
    </citation>
    <scope>NUCLEOTIDE SEQUENCE [LARGE SCALE GENOMIC DNA]</scope>
    <source>
        <strain>K12 / DH10B</strain>
    </source>
</reference>
<dbReference type="EC" id="6.5.1.2" evidence="1"/>
<dbReference type="EMBL" id="CP000948">
    <property type="protein sequence ID" value="ACB04696.1"/>
    <property type="molecule type" value="Genomic_DNA"/>
</dbReference>
<dbReference type="RefSeq" id="WP_000870036.1">
    <property type="nucleotide sequence ID" value="NC_010473.1"/>
</dbReference>
<dbReference type="SMR" id="B1X980"/>
<dbReference type="KEGG" id="ecd:ECDH10B_3829"/>
<dbReference type="HOGENOM" id="CLU_489786_0_0_6"/>
<dbReference type="GO" id="GO:0003911">
    <property type="term" value="F:DNA ligase (NAD+) activity"/>
    <property type="evidence" value="ECO:0007669"/>
    <property type="project" value="UniProtKB-UniRule"/>
</dbReference>
<dbReference type="GO" id="GO:0006281">
    <property type="term" value="P:DNA repair"/>
    <property type="evidence" value="ECO:0007669"/>
    <property type="project" value="UniProtKB-KW"/>
</dbReference>
<dbReference type="GO" id="GO:0006260">
    <property type="term" value="P:DNA replication"/>
    <property type="evidence" value="ECO:0007669"/>
    <property type="project" value="UniProtKB-KW"/>
</dbReference>
<dbReference type="FunFam" id="1.10.287.610:FF:000003">
    <property type="entry name" value="DNA ligase B"/>
    <property type="match status" value="1"/>
</dbReference>
<dbReference type="FunFam" id="2.40.50.140:FF:000139">
    <property type="entry name" value="DNA ligase B"/>
    <property type="match status" value="1"/>
</dbReference>
<dbReference type="FunFam" id="3.30.470.30:FF:000007">
    <property type="entry name" value="DNA ligase B"/>
    <property type="match status" value="1"/>
</dbReference>
<dbReference type="Gene3D" id="3.30.470.30">
    <property type="entry name" value="DNA ligase/mRNA capping enzyme"/>
    <property type="match status" value="1"/>
</dbReference>
<dbReference type="Gene3D" id="1.10.287.610">
    <property type="entry name" value="Helix hairpin bin"/>
    <property type="match status" value="1"/>
</dbReference>
<dbReference type="Gene3D" id="2.40.50.140">
    <property type="entry name" value="Nucleic acid-binding proteins"/>
    <property type="match status" value="1"/>
</dbReference>
<dbReference type="HAMAP" id="MF_01587">
    <property type="entry name" value="DNA_ligase_B"/>
    <property type="match status" value="1"/>
</dbReference>
<dbReference type="InterPro" id="IPR018239">
    <property type="entry name" value="DNA_ligase_AS"/>
</dbReference>
<dbReference type="InterPro" id="IPR020923">
    <property type="entry name" value="DNA_ligase_B"/>
</dbReference>
<dbReference type="InterPro" id="IPR033136">
    <property type="entry name" value="DNA_ligase_CS"/>
</dbReference>
<dbReference type="InterPro" id="IPR013839">
    <property type="entry name" value="DNAligase_adenylation"/>
</dbReference>
<dbReference type="InterPro" id="IPR013840">
    <property type="entry name" value="DNAligase_N"/>
</dbReference>
<dbReference type="InterPro" id="IPR012340">
    <property type="entry name" value="NA-bd_OB-fold"/>
</dbReference>
<dbReference type="InterPro" id="IPR050326">
    <property type="entry name" value="NAD_dep_DNA_ligaseB"/>
</dbReference>
<dbReference type="InterPro" id="IPR004150">
    <property type="entry name" value="NAD_DNA_ligase_OB"/>
</dbReference>
<dbReference type="InterPro" id="IPR010994">
    <property type="entry name" value="RuvA_2-like"/>
</dbReference>
<dbReference type="NCBIfam" id="NF005987">
    <property type="entry name" value="PRK08097.1"/>
    <property type="match status" value="1"/>
</dbReference>
<dbReference type="PANTHER" id="PTHR47810">
    <property type="entry name" value="DNA LIGASE"/>
    <property type="match status" value="1"/>
</dbReference>
<dbReference type="PANTHER" id="PTHR47810:SF1">
    <property type="entry name" value="DNA LIGASE B"/>
    <property type="match status" value="1"/>
</dbReference>
<dbReference type="Pfam" id="PF01653">
    <property type="entry name" value="DNA_ligase_aden"/>
    <property type="match status" value="1"/>
</dbReference>
<dbReference type="Pfam" id="PF03120">
    <property type="entry name" value="DNA_ligase_OB"/>
    <property type="match status" value="1"/>
</dbReference>
<dbReference type="SMART" id="SM00532">
    <property type="entry name" value="LIGANc"/>
    <property type="match status" value="1"/>
</dbReference>
<dbReference type="SUPFAM" id="SSF56091">
    <property type="entry name" value="DNA ligase/mRNA capping enzyme, catalytic domain"/>
    <property type="match status" value="1"/>
</dbReference>
<dbReference type="SUPFAM" id="SSF50249">
    <property type="entry name" value="Nucleic acid-binding proteins"/>
    <property type="match status" value="1"/>
</dbReference>
<dbReference type="SUPFAM" id="SSF47781">
    <property type="entry name" value="RuvA domain 2-like"/>
    <property type="match status" value="1"/>
</dbReference>
<dbReference type="PROSITE" id="PS01055">
    <property type="entry name" value="DNA_LIGASE_N1"/>
    <property type="match status" value="1"/>
</dbReference>
<dbReference type="PROSITE" id="PS01056">
    <property type="entry name" value="DNA_LIGASE_N2"/>
    <property type="match status" value="1"/>
</dbReference>
<accession>B1X980</accession>
<sequence length="560" mass="63179">MKVWMAILIGILCWQSSVWAVCPAWSPARAQEEISRLQQQIKQWDDDYWKEGKSEVEDGVYDQLSARLTQWQRCFGSEPRDVMMPPLNGAVMHPVAHTGVRKMVDKNALSLWMRERSDLWVQPKVDGVAVTLVYRDGKLNKAISRGNGLKGEDWTQKVSLISAVPQTVSGPLANSTLQGEIFLQREGHIQQQMGGINARAKVAGLMMRQDDSDTLNSLGVFVWAWPDGPQLMSDRLKELATAGFTLTQTYTRAVKNADEVARVRNEWWKAELPFVTDGVVVRAAKEPESRHWLPGQAEWLVAWKYQPVAQVAEVKAIQFAVGKSGKISVVASLAPVMLDDKKVQRVNIGSVRRWQEWDIAPGDQILVSLAGQGIPRIDDVVWRGAERTKPTPPENRFNSLTCYFASDVCQEQFISRLVWLGAKQVLGLDGIGEAGWRALHQTHRFEHIFSWLLLTPEQLQNTPGIAKSKSAQLWHQFNLARKQPFTRWVMAMGIPLTRAALNASDERSWSQLLFSTEQFWQQLPGTGSGRARQVIEWKENAQIKKLGSWLAAQQITGFEP</sequence>
<comment type="function">
    <text evidence="1">Catalyzes the formation of phosphodiester linkages between 5'-phosphoryl and 3'-hydroxyl groups in double-stranded DNA using NAD as a coenzyme and as the energy source for the reaction.</text>
</comment>
<comment type="catalytic activity">
    <reaction evidence="1">
        <text>NAD(+) + (deoxyribonucleotide)n-3'-hydroxyl + 5'-phospho-(deoxyribonucleotide)m = (deoxyribonucleotide)n+m + AMP + beta-nicotinamide D-nucleotide.</text>
        <dbReference type="EC" id="6.5.1.2"/>
    </reaction>
</comment>
<comment type="similarity">
    <text evidence="1">Belongs to the NAD-dependent DNA ligase family. LigB subfamily.</text>
</comment>
<keyword id="KW-0227">DNA damage</keyword>
<keyword id="KW-0234">DNA repair</keyword>
<keyword id="KW-0235">DNA replication</keyword>
<keyword id="KW-0436">Ligase</keyword>
<keyword id="KW-0520">NAD</keyword>
<gene>
    <name evidence="1" type="primary">ligB</name>
    <name type="ordered locus">ECDH10B_3829</name>
</gene>
<evidence type="ECO:0000255" key="1">
    <source>
        <dbReference type="HAMAP-Rule" id="MF_01587"/>
    </source>
</evidence>